<reference key="1">
    <citation type="journal article" date="2004" name="Nucleic Acids Res.">
        <title>Genome sequence of Symbiobacterium thermophilum, an uncultivable bacterium that depends on microbial commensalism.</title>
        <authorList>
            <person name="Ueda K."/>
            <person name="Yamashita A."/>
            <person name="Ishikawa J."/>
            <person name="Shimada M."/>
            <person name="Watsuji T."/>
            <person name="Morimura K."/>
            <person name="Ikeda H."/>
            <person name="Hattori M."/>
            <person name="Beppu T."/>
        </authorList>
    </citation>
    <scope>NUCLEOTIDE SEQUENCE [LARGE SCALE GENOMIC DNA]</scope>
    <source>
        <strain>DSM 24528 / JCM 14929 / IAM 14863 / T</strain>
    </source>
</reference>
<dbReference type="EMBL" id="AP006840">
    <property type="protein sequence ID" value="BAD42069.1"/>
    <property type="molecule type" value="Genomic_DNA"/>
</dbReference>
<dbReference type="RefSeq" id="WP_011197202.1">
    <property type="nucleotide sequence ID" value="NC_006177.1"/>
</dbReference>
<dbReference type="SMR" id="Q67JT1"/>
<dbReference type="STRING" id="292459.STH3087"/>
<dbReference type="KEGG" id="sth:STH3087"/>
<dbReference type="eggNOG" id="COG0244">
    <property type="taxonomic scope" value="Bacteria"/>
</dbReference>
<dbReference type="HOGENOM" id="CLU_092227_2_0_9"/>
<dbReference type="OrthoDB" id="9808307at2"/>
<dbReference type="Proteomes" id="UP000000417">
    <property type="component" value="Chromosome"/>
</dbReference>
<dbReference type="GO" id="GO:0015934">
    <property type="term" value="C:large ribosomal subunit"/>
    <property type="evidence" value="ECO:0007669"/>
    <property type="project" value="InterPro"/>
</dbReference>
<dbReference type="GO" id="GO:0070180">
    <property type="term" value="F:large ribosomal subunit rRNA binding"/>
    <property type="evidence" value="ECO:0007669"/>
    <property type="project" value="UniProtKB-UniRule"/>
</dbReference>
<dbReference type="GO" id="GO:0003735">
    <property type="term" value="F:structural constituent of ribosome"/>
    <property type="evidence" value="ECO:0007669"/>
    <property type="project" value="InterPro"/>
</dbReference>
<dbReference type="GO" id="GO:0006412">
    <property type="term" value="P:translation"/>
    <property type="evidence" value="ECO:0007669"/>
    <property type="project" value="UniProtKB-UniRule"/>
</dbReference>
<dbReference type="CDD" id="cd05797">
    <property type="entry name" value="Ribosomal_L10"/>
    <property type="match status" value="1"/>
</dbReference>
<dbReference type="Gene3D" id="3.30.70.1730">
    <property type="match status" value="1"/>
</dbReference>
<dbReference type="Gene3D" id="6.10.250.290">
    <property type="match status" value="1"/>
</dbReference>
<dbReference type="HAMAP" id="MF_00362">
    <property type="entry name" value="Ribosomal_uL10"/>
    <property type="match status" value="1"/>
</dbReference>
<dbReference type="InterPro" id="IPR001790">
    <property type="entry name" value="Ribosomal_uL10"/>
</dbReference>
<dbReference type="InterPro" id="IPR043141">
    <property type="entry name" value="Ribosomal_uL10-like_sf"/>
</dbReference>
<dbReference type="InterPro" id="IPR022973">
    <property type="entry name" value="Ribosomal_uL10_bac"/>
</dbReference>
<dbReference type="InterPro" id="IPR047865">
    <property type="entry name" value="Ribosomal_uL10_bac_type"/>
</dbReference>
<dbReference type="InterPro" id="IPR002363">
    <property type="entry name" value="Ribosomal_uL10_CS_bac"/>
</dbReference>
<dbReference type="NCBIfam" id="NF000955">
    <property type="entry name" value="PRK00099.1-1"/>
    <property type="match status" value="1"/>
</dbReference>
<dbReference type="PANTHER" id="PTHR11560">
    <property type="entry name" value="39S RIBOSOMAL PROTEIN L10, MITOCHONDRIAL"/>
    <property type="match status" value="1"/>
</dbReference>
<dbReference type="Pfam" id="PF00466">
    <property type="entry name" value="Ribosomal_L10"/>
    <property type="match status" value="1"/>
</dbReference>
<dbReference type="SUPFAM" id="SSF160369">
    <property type="entry name" value="Ribosomal protein L10-like"/>
    <property type="match status" value="1"/>
</dbReference>
<dbReference type="PROSITE" id="PS01109">
    <property type="entry name" value="RIBOSOMAL_L10"/>
    <property type="match status" value="1"/>
</dbReference>
<name>RL10_SYMTH</name>
<keyword id="KW-1185">Reference proteome</keyword>
<keyword id="KW-0687">Ribonucleoprotein</keyword>
<keyword id="KW-0689">Ribosomal protein</keyword>
<keyword id="KW-0694">RNA-binding</keyword>
<keyword id="KW-0699">rRNA-binding</keyword>
<evidence type="ECO:0000255" key="1">
    <source>
        <dbReference type="HAMAP-Rule" id="MF_00362"/>
    </source>
</evidence>
<evidence type="ECO:0000305" key="2"/>
<comment type="function">
    <text evidence="1">Forms part of the ribosomal stalk, playing a central role in the interaction of the ribosome with GTP-bound translation factors.</text>
</comment>
<comment type="subunit">
    <text evidence="1">Part of the ribosomal stalk of the 50S ribosomal subunit. The N-terminus interacts with L11 and the large rRNA to form the base of the stalk. The C-terminus forms an elongated spine to which L12 dimers bind in a sequential fashion forming a multimeric L10(L12)X complex.</text>
</comment>
<comment type="similarity">
    <text evidence="1">Belongs to the universal ribosomal protein uL10 family.</text>
</comment>
<accession>Q67JT1</accession>
<proteinExistence type="inferred from homology"/>
<protein>
    <recommendedName>
        <fullName evidence="1">Large ribosomal subunit protein uL10</fullName>
    </recommendedName>
    <alternativeName>
        <fullName evidence="2">50S ribosomal protein L10</fullName>
    </alternativeName>
</protein>
<gene>
    <name evidence="1" type="primary">rplJ</name>
    <name type="ordered locus">STH3087</name>
</gene>
<sequence>MRTIRPEKQQAVAELKEALQNAKSVVLADNLGLTVAQVTQLRRELRQAGVELKVAKNTLIGIAARELGIEGLEPYLHGTTTLAFSYEDEAAGAKKIREFFAKEREPKFVMKAGILEGKVIDADGVKALADLPNRETLLAQVLAGIQAPLQGVAGAINGLLASFAYALDARIRQLEGAEA</sequence>
<organism>
    <name type="scientific">Symbiobacterium thermophilum (strain DSM 24528 / JCM 14929 / IAM 14863 / T)</name>
    <dbReference type="NCBI Taxonomy" id="292459"/>
    <lineage>
        <taxon>Bacteria</taxon>
        <taxon>Bacillati</taxon>
        <taxon>Bacillota</taxon>
        <taxon>Clostridia</taxon>
        <taxon>Eubacteriales</taxon>
        <taxon>Symbiobacteriaceae</taxon>
        <taxon>Symbiobacterium</taxon>
    </lineage>
</organism>
<feature type="chain" id="PRO_0000154729" description="Large ribosomal subunit protein uL10">
    <location>
        <begin position="1"/>
        <end position="179"/>
    </location>
</feature>